<organism>
    <name type="scientific">Arabidopsis thaliana</name>
    <name type="common">Mouse-ear cress</name>
    <dbReference type="NCBI Taxonomy" id="3702"/>
    <lineage>
        <taxon>Eukaryota</taxon>
        <taxon>Viridiplantae</taxon>
        <taxon>Streptophyta</taxon>
        <taxon>Embryophyta</taxon>
        <taxon>Tracheophyta</taxon>
        <taxon>Spermatophyta</taxon>
        <taxon>Magnoliopsida</taxon>
        <taxon>eudicotyledons</taxon>
        <taxon>Gunneridae</taxon>
        <taxon>Pentapetalae</taxon>
        <taxon>rosids</taxon>
        <taxon>malvids</taxon>
        <taxon>Brassicales</taxon>
        <taxon>Brassicaceae</taxon>
        <taxon>Camelineae</taxon>
        <taxon>Arabidopsis</taxon>
    </lineage>
</organism>
<feature type="initiator methionine" description="Removed" evidence="1">
    <location>
        <position position="1"/>
    </location>
</feature>
<feature type="chain" id="PRO_0000308659" description="Casparian strip membrane protein 1">
    <location>
        <begin position="2"/>
        <end position="206"/>
    </location>
</feature>
<feature type="topological domain" description="Cytoplasmic" evidence="2">
    <location>
        <begin position="2"/>
        <end position="43"/>
    </location>
</feature>
<feature type="transmembrane region" description="Helical" evidence="2">
    <location>
        <begin position="44"/>
        <end position="64"/>
    </location>
</feature>
<feature type="topological domain" description="Extracellular" evidence="2">
    <location>
        <begin position="65"/>
        <end position="95"/>
    </location>
</feature>
<feature type="transmembrane region" description="Helical" evidence="2">
    <location>
        <begin position="96"/>
        <end position="116"/>
    </location>
</feature>
<feature type="topological domain" description="Cytoplasmic" evidence="2">
    <location>
        <begin position="117"/>
        <end position="127"/>
    </location>
</feature>
<feature type="transmembrane region" description="Helical" evidence="2">
    <location>
        <begin position="128"/>
        <end position="148"/>
    </location>
</feature>
<feature type="topological domain" description="Extracellular" evidence="2">
    <location>
        <begin position="149"/>
        <end position="180"/>
    </location>
</feature>
<feature type="transmembrane region" description="Helical" evidence="2">
    <location>
        <begin position="181"/>
        <end position="201"/>
    </location>
</feature>
<feature type="topological domain" description="Cytoplasmic" evidence="2">
    <location>
        <begin position="202"/>
        <end position="206"/>
    </location>
</feature>
<feature type="modified residue" description="N-acetylalanine" evidence="1">
    <location>
        <position position="2"/>
    </location>
</feature>
<feature type="glycosylation site" description="N-linked (GlcNAc...) asparagine" evidence="2">
    <location>
        <position position="159"/>
    </location>
</feature>
<feature type="glycosylation site" description="N-linked (GlcNAc...) asparagine" evidence="2">
    <location>
        <position position="177"/>
    </location>
</feature>
<feature type="mutagenesis site" description="Normal subcellular localization." evidence="4">
    <location>
        <begin position="72"/>
        <end position="80"/>
    </location>
</feature>
<feature type="mutagenesis site" description="Normal subcellular localization." evidence="4">
    <location>
        <begin position="73"/>
        <end position="79"/>
    </location>
</feature>
<feature type="mutagenesis site" description="Normal subcellular localization." evidence="4">
    <location>
        <begin position="74"/>
        <end position="78"/>
    </location>
</feature>
<feature type="mutagenesis site" description="Not detectable probably due to an impaired folding leading to instability." evidence="4">
    <original>D</original>
    <variation>H</variation>
    <location>
        <position position="134"/>
    </location>
</feature>
<feature type="mutagenesis site" description="Normal subcellular localization." evidence="4">
    <location>
        <begin position="158"/>
        <end position="175"/>
    </location>
</feature>
<feature type="mutagenesis site" description="Abnormal subcellular localization." evidence="4">
    <original>G</original>
    <variation>S</variation>
    <location>
        <position position="158"/>
    </location>
</feature>
<feature type="mutagenesis site" description="Abnormal subcellular localization." evidence="4">
    <original>W</original>
    <variation>G</variation>
    <location>
        <position position="164"/>
    </location>
</feature>
<feature type="mutagenesis site" description="Abnormal subcellular localization." evidence="4">
    <original>C</original>
    <variation>S</variation>
    <location>
        <position position="168"/>
    </location>
</feature>
<feature type="mutagenesis site" description="Normal subcellular localization." evidence="4">
    <original>Q</original>
    <variation>E</variation>
    <location>
        <position position="170"/>
    </location>
</feature>
<feature type="mutagenesis site" description="Abnormal subcellular localization." evidence="4">
    <original>F</original>
    <variation>V</variation>
    <location>
        <position position="174"/>
    </location>
</feature>
<feature type="mutagenesis site" description="Abnormal subcellular localization." evidence="4">
    <original>C</original>
    <variation>S</variation>
    <location>
        <position position="175"/>
    </location>
</feature>
<keyword id="KW-0007">Acetylation</keyword>
<keyword id="KW-1003">Cell membrane</keyword>
<keyword id="KW-0961">Cell wall biogenesis/degradation</keyword>
<keyword id="KW-0325">Glycoprotein</keyword>
<keyword id="KW-0472">Membrane</keyword>
<keyword id="KW-1185">Reference proteome</keyword>
<keyword id="KW-0812">Transmembrane</keyword>
<keyword id="KW-1133">Transmembrane helix</keyword>
<protein>
    <recommendedName>
        <fullName>Casparian strip membrane protein 1</fullName>
        <shortName>AtCASP1</shortName>
    </recommendedName>
</protein>
<gene>
    <name type="primary">CASP1</name>
    <name type="ordered locus">At2g36100</name>
    <name type="ORF">F9C22.3</name>
</gene>
<evidence type="ECO:0000250" key="1">
    <source>
        <dbReference type="UniProtKB" id="Q9SQU2"/>
    </source>
</evidence>
<evidence type="ECO:0000255" key="2"/>
<evidence type="ECO:0000269" key="3">
    <source>
    </source>
</evidence>
<evidence type="ECO:0000269" key="4">
    <source>
    </source>
</evidence>
<evidence type="ECO:0000305" key="5"/>
<sequence length="206" mass="21970">MAKESTTIDVGEPSTVTKSSSHVVKDAKKKGFVAVASRGGAKRGLAIFDFLLRLAAIAVTIGAASVMYTAEETLPFFTQFLQFQAGYDDLPAFQYFVIAVAVVASYLVLSLPFSIVSIVRPHAVAPRLILLICDTLVVTLNTSAAAAAASITYLAHNGNQSTNWLPICQQFGDFCQNVSTAVVADSIAILFFIVLIIISAIALKRH</sequence>
<dbReference type="EMBL" id="AC007135">
    <property type="protein sequence ID" value="AAD26967.1"/>
    <property type="molecule type" value="Genomic_DNA"/>
</dbReference>
<dbReference type="EMBL" id="CP002685">
    <property type="protein sequence ID" value="AEC09206.1"/>
    <property type="molecule type" value="Genomic_DNA"/>
</dbReference>
<dbReference type="EMBL" id="BT003113">
    <property type="protein sequence ID" value="AAO24545.1"/>
    <property type="molecule type" value="mRNA"/>
</dbReference>
<dbReference type="EMBL" id="AK228127">
    <property type="protein sequence ID" value="BAF00084.1"/>
    <property type="molecule type" value="mRNA"/>
</dbReference>
<dbReference type="PIR" id="H84776">
    <property type="entry name" value="H84776"/>
</dbReference>
<dbReference type="RefSeq" id="NP_181154.1">
    <property type="nucleotide sequence ID" value="NM_129169.3"/>
</dbReference>
<dbReference type="SMR" id="Q9SIH4"/>
<dbReference type="BioGRID" id="3527">
    <property type="interactions" value="4"/>
</dbReference>
<dbReference type="DIP" id="DIP-59177N"/>
<dbReference type="FunCoup" id="Q9SIH4">
    <property type="interactions" value="48"/>
</dbReference>
<dbReference type="IntAct" id="Q9SIH4">
    <property type="interactions" value="8"/>
</dbReference>
<dbReference type="STRING" id="3702.Q9SIH4"/>
<dbReference type="GlyCosmos" id="Q9SIH4">
    <property type="glycosylation" value="2 sites, No reported glycans"/>
</dbReference>
<dbReference type="GlyGen" id="Q9SIH4">
    <property type="glycosylation" value="3 sites"/>
</dbReference>
<dbReference type="iPTMnet" id="Q9SIH4"/>
<dbReference type="PaxDb" id="3702-AT2G36100.1"/>
<dbReference type="ProteomicsDB" id="222802"/>
<dbReference type="EnsemblPlants" id="AT2G36100.1">
    <property type="protein sequence ID" value="AT2G36100.1"/>
    <property type="gene ID" value="AT2G36100"/>
</dbReference>
<dbReference type="GeneID" id="818183"/>
<dbReference type="Gramene" id="AT2G36100.1">
    <property type="protein sequence ID" value="AT2G36100.1"/>
    <property type="gene ID" value="AT2G36100"/>
</dbReference>
<dbReference type="KEGG" id="ath:AT2G36100"/>
<dbReference type="Araport" id="AT2G36100"/>
<dbReference type="TAIR" id="AT2G36100">
    <property type="gene designation" value="CASP1"/>
</dbReference>
<dbReference type="eggNOG" id="ENOG502R7BC">
    <property type="taxonomic scope" value="Eukaryota"/>
</dbReference>
<dbReference type="HOGENOM" id="CLU_066104_3_1_1"/>
<dbReference type="InParanoid" id="Q9SIH4"/>
<dbReference type="OMA" id="FHAQYND"/>
<dbReference type="OrthoDB" id="753675at2759"/>
<dbReference type="PhylomeDB" id="Q9SIH4"/>
<dbReference type="PRO" id="PR:Q9SIH4"/>
<dbReference type="Proteomes" id="UP000006548">
    <property type="component" value="Chromosome 2"/>
</dbReference>
<dbReference type="ExpressionAtlas" id="Q9SIH4">
    <property type="expression patterns" value="baseline and differential"/>
</dbReference>
<dbReference type="GO" id="GO:0048226">
    <property type="term" value="C:Casparian strip"/>
    <property type="evidence" value="ECO:0000314"/>
    <property type="project" value="UniProtKB"/>
</dbReference>
<dbReference type="GO" id="GO:0005886">
    <property type="term" value="C:plasma membrane"/>
    <property type="evidence" value="ECO:0000314"/>
    <property type="project" value="UniProtKB"/>
</dbReference>
<dbReference type="GO" id="GO:0042803">
    <property type="term" value="F:protein homodimerization activity"/>
    <property type="evidence" value="ECO:0000314"/>
    <property type="project" value="UniProtKB"/>
</dbReference>
<dbReference type="GO" id="GO:0042545">
    <property type="term" value="P:cell wall modification"/>
    <property type="evidence" value="ECO:0000315"/>
    <property type="project" value="UniProtKB"/>
</dbReference>
<dbReference type="GO" id="GO:0007043">
    <property type="term" value="P:cell-cell junction assembly"/>
    <property type="evidence" value="ECO:0000314"/>
    <property type="project" value="UniProtKB"/>
</dbReference>
<dbReference type="InterPro" id="IPR006459">
    <property type="entry name" value="CASP/CASPL"/>
</dbReference>
<dbReference type="InterPro" id="IPR006702">
    <property type="entry name" value="CASP_dom"/>
</dbReference>
<dbReference type="InterPro" id="IPR044173">
    <property type="entry name" value="CASPL"/>
</dbReference>
<dbReference type="NCBIfam" id="TIGR01569">
    <property type="entry name" value="A_tha_TIGR01569"/>
    <property type="match status" value="1"/>
</dbReference>
<dbReference type="PANTHER" id="PTHR36488:SF11">
    <property type="entry name" value="CASP-LIKE PROTEIN"/>
    <property type="match status" value="1"/>
</dbReference>
<dbReference type="PANTHER" id="PTHR36488">
    <property type="entry name" value="CASP-LIKE PROTEIN 1U1"/>
    <property type="match status" value="1"/>
</dbReference>
<dbReference type="Pfam" id="PF04535">
    <property type="entry name" value="CASP_dom"/>
    <property type="match status" value="1"/>
</dbReference>
<proteinExistence type="evidence at protein level"/>
<name>CASP1_ARATH</name>
<accession>Q9SIH4</accession>
<reference key="1">
    <citation type="journal article" date="1999" name="Nature">
        <title>Sequence and analysis of chromosome 2 of the plant Arabidopsis thaliana.</title>
        <authorList>
            <person name="Lin X."/>
            <person name="Kaul S."/>
            <person name="Rounsley S.D."/>
            <person name="Shea T.P."/>
            <person name="Benito M.-I."/>
            <person name="Town C.D."/>
            <person name="Fujii C.Y."/>
            <person name="Mason T.M."/>
            <person name="Bowman C.L."/>
            <person name="Barnstead M.E."/>
            <person name="Feldblyum T.V."/>
            <person name="Buell C.R."/>
            <person name="Ketchum K.A."/>
            <person name="Lee J.J."/>
            <person name="Ronning C.M."/>
            <person name="Koo H.L."/>
            <person name="Moffat K.S."/>
            <person name="Cronin L.A."/>
            <person name="Shen M."/>
            <person name="Pai G."/>
            <person name="Van Aken S."/>
            <person name="Umayam L."/>
            <person name="Tallon L.J."/>
            <person name="Gill J.E."/>
            <person name="Adams M.D."/>
            <person name="Carrera A.J."/>
            <person name="Creasy T.H."/>
            <person name="Goodman H.M."/>
            <person name="Somerville C.R."/>
            <person name="Copenhaver G.P."/>
            <person name="Preuss D."/>
            <person name="Nierman W.C."/>
            <person name="White O."/>
            <person name="Eisen J.A."/>
            <person name="Salzberg S.L."/>
            <person name="Fraser C.M."/>
            <person name="Venter J.C."/>
        </authorList>
    </citation>
    <scope>NUCLEOTIDE SEQUENCE [LARGE SCALE GENOMIC DNA]</scope>
    <source>
        <strain>cv. Columbia</strain>
    </source>
</reference>
<reference key="2">
    <citation type="journal article" date="2017" name="Plant J.">
        <title>Araport11: a complete reannotation of the Arabidopsis thaliana reference genome.</title>
        <authorList>
            <person name="Cheng C.Y."/>
            <person name="Krishnakumar V."/>
            <person name="Chan A.P."/>
            <person name="Thibaud-Nissen F."/>
            <person name="Schobel S."/>
            <person name="Town C.D."/>
        </authorList>
    </citation>
    <scope>GENOME REANNOTATION</scope>
    <source>
        <strain>cv. Columbia</strain>
    </source>
</reference>
<reference key="3">
    <citation type="journal article" date="2003" name="Science">
        <title>Empirical analysis of transcriptional activity in the Arabidopsis genome.</title>
        <authorList>
            <person name="Yamada K."/>
            <person name="Lim J."/>
            <person name="Dale J.M."/>
            <person name="Chen H."/>
            <person name="Shinn P."/>
            <person name="Palm C.J."/>
            <person name="Southwick A.M."/>
            <person name="Wu H.C."/>
            <person name="Kim C.J."/>
            <person name="Nguyen M."/>
            <person name="Pham P.K."/>
            <person name="Cheuk R.F."/>
            <person name="Karlin-Newmann G."/>
            <person name="Liu S.X."/>
            <person name="Lam B."/>
            <person name="Sakano H."/>
            <person name="Wu T."/>
            <person name="Yu G."/>
            <person name="Miranda M."/>
            <person name="Quach H.L."/>
            <person name="Tripp M."/>
            <person name="Chang C.H."/>
            <person name="Lee J.M."/>
            <person name="Toriumi M.J."/>
            <person name="Chan M.M."/>
            <person name="Tang C.C."/>
            <person name="Onodera C.S."/>
            <person name="Deng J.M."/>
            <person name="Akiyama K."/>
            <person name="Ansari Y."/>
            <person name="Arakawa T."/>
            <person name="Banh J."/>
            <person name="Banno F."/>
            <person name="Bowser L."/>
            <person name="Brooks S.Y."/>
            <person name="Carninci P."/>
            <person name="Chao Q."/>
            <person name="Choy N."/>
            <person name="Enju A."/>
            <person name="Goldsmith A.D."/>
            <person name="Gurjal M."/>
            <person name="Hansen N.F."/>
            <person name="Hayashizaki Y."/>
            <person name="Johnson-Hopson C."/>
            <person name="Hsuan V.W."/>
            <person name="Iida K."/>
            <person name="Karnes M."/>
            <person name="Khan S."/>
            <person name="Koesema E."/>
            <person name="Ishida J."/>
            <person name="Jiang P.X."/>
            <person name="Jones T."/>
            <person name="Kawai J."/>
            <person name="Kamiya A."/>
            <person name="Meyers C."/>
            <person name="Nakajima M."/>
            <person name="Narusaka M."/>
            <person name="Seki M."/>
            <person name="Sakurai T."/>
            <person name="Satou M."/>
            <person name="Tamse R."/>
            <person name="Vaysberg M."/>
            <person name="Wallender E.K."/>
            <person name="Wong C."/>
            <person name="Yamamura Y."/>
            <person name="Yuan S."/>
            <person name="Shinozaki K."/>
            <person name="Davis R.W."/>
            <person name="Theologis A."/>
            <person name="Ecker J.R."/>
        </authorList>
    </citation>
    <scope>NUCLEOTIDE SEQUENCE [LARGE SCALE MRNA]</scope>
    <source>
        <strain>cv. Columbia</strain>
    </source>
</reference>
<reference key="4">
    <citation type="submission" date="2006-07" db="EMBL/GenBank/DDBJ databases">
        <title>Large-scale analysis of RIKEN Arabidopsis full-length (RAFL) cDNAs.</title>
        <authorList>
            <person name="Totoki Y."/>
            <person name="Seki M."/>
            <person name="Ishida J."/>
            <person name="Nakajima M."/>
            <person name="Enju A."/>
            <person name="Kamiya A."/>
            <person name="Narusaka M."/>
            <person name="Shin-i T."/>
            <person name="Nakagawa M."/>
            <person name="Sakamoto N."/>
            <person name="Oishi K."/>
            <person name="Kohara Y."/>
            <person name="Kobayashi M."/>
            <person name="Toyoda A."/>
            <person name="Sakaki Y."/>
            <person name="Sakurai T."/>
            <person name="Iida K."/>
            <person name="Akiyama K."/>
            <person name="Satou M."/>
            <person name="Toyoda T."/>
            <person name="Konagaya A."/>
            <person name="Carninci P."/>
            <person name="Kawai J."/>
            <person name="Hayashizaki Y."/>
            <person name="Shinozaki K."/>
        </authorList>
    </citation>
    <scope>NUCLEOTIDE SEQUENCE [LARGE SCALE MRNA]</scope>
    <source>
        <strain>cv. Columbia</strain>
    </source>
</reference>
<reference key="5">
    <citation type="journal article" date="2011" name="Nature">
        <title>A novel protein family directs Casparian strip formation in the endodermis.</title>
        <authorList>
            <person name="Roppolo D."/>
            <person name="De Rybel B."/>
            <person name="Denervaud Tendon V."/>
            <person name="Pfister A."/>
            <person name="Alassimone J."/>
            <person name="Vermeer J.E.M."/>
            <person name="Yamazaki M."/>
            <person name="Stierhof Y.-D."/>
            <person name="Beeckman T."/>
            <person name="Geldner N."/>
        </authorList>
    </citation>
    <scope>FUNCTION</scope>
    <scope>DISRUPTION PHENOTYPE</scope>
    <scope>SUBCELLULAR LOCATION</scope>
    <scope>DIMERIZATION</scope>
    <scope>INTERACTION WITH CASP2; CASP3; CASP4 AND CASP5</scope>
    <source>
        <strain>cv. Columbia</strain>
    </source>
</reference>
<reference key="6">
    <citation type="journal article" date="2014" name="Plant Physiol.">
        <title>Functional and evolutionary analysis of the CASPARIAN STRIP MEMBRANE DOMAIN PROTEIN family.</title>
        <authorList>
            <person name="Roppolo D."/>
            <person name="Boeckmann B."/>
            <person name="Pfister A."/>
            <person name="Boutet E."/>
            <person name="Rubio M.C."/>
            <person name="Denervaud-Tendon V."/>
            <person name="Vermeer J.E."/>
            <person name="Gheyselinck J."/>
            <person name="Xenarios I."/>
            <person name="Geldner N."/>
        </authorList>
    </citation>
    <scope>GENE FAMILY</scope>
    <scope>NOMENCLATURE</scope>
    <scope>SUBCELLULAR LOCATION</scope>
    <scope>MUTAGENESIS OF 72-GLU--PHE-80; 73-THR--GLN-79; 74-LEU--THR-78; ASP-134; GLY-158; 158-GLY--CYS-175; TRP-164; CYS-168; GLN-170; PHE-174 AND CYS-175</scope>
</reference>
<comment type="function">
    <text evidence="3">Regulates membrane-cell wall junctions and localized cell wall deposition. Required for establishment of the Casparian strip membrane domain (CSD) and the subsequent formation of Casparian strips, a cell wall modification of the root endodermis that determines an apoplastic barrier between the intraorganismal apoplasm and the extraorganismal apoplasm and prevents lateral diffusion.</text>
</comment>
<comment type="subunit">
    <text evidence="3">Homodimer and heterodimers with other CASP proteins. Interacts with CASP2, CASP3, CASP4 and CASP5.</text>
</comment>
<comment type="interaction">
    <interactant intactId="EBI-4451446">
        <id>Q9SIH4</id>
    </interactant>
    <interactant intactId="EBI-15927653">
        <id>Q9ZQI2</id>
        <label>CASP3</label>
    </interactant>
    <organismsDiffer>false</organismsDiffer>
    <experiments>2</experiments>
</comment>
<comment type="subcellular location">
    <subcellularLocation>
        <location evidence="3 4">Cell membrane</location>
        <topology evidence="3 4">Multi-pass membrane protein</topology>
    </subcellularLocation>
    <text>Very restricted localization following a belt shape within the plasma membrane which coincides with the position of the Casparian strip membrane domain.</text>
</comment>
<comment type="disruption phenotype">
    <text evidence="3">Disorganised deposition of Casparian strips.</text>
</comment>
<comment type="similarity">
    <text evidence="5">Belongs to the Casparian strip membrane proteins (CASP) family.</text>
</comment>